<proteinExistence type="inferred from homology"/>
<comment type="function">
    <text evidence="1">Involved in the maturation of [NiFe] hydrogenases. Required for nickel insertion into the metal center of the hydrogenase.</text>
</comment>
<comment type="similarity">
    <text evidence="1">Belongs to the HypA/HybF family.</text>
</comment>
<reference key="1">
    <citation type="journal article" date="2008" name="J. Bacteriol.">
        <title>The complete genome sequence of Thermococcus onnurineus NA1 reveals a mixed heterotrophic and carboxydotrophic metabolism.</title>
        <authorList>
            <person name="Lee H.S."/>
            <person name="Kang S.G."/>
            <person name="Bae S.S."/>
            <person name="Lim J.K."/>
            <person name="Cho Y."/>
            <person name="Kim Y.J."/>
            <person name="Jeon J.H."/>
            <person name="Cha S.-S."/>
            <person name="Kwon K.K."/>
            <person name="Kim H.-T."/>
            <person name="Park C.-J."/>
            <person name="Lee H.-W."/>
            <person name="Kim S.I."/>
            <person name="Chun J."/>
            <person name="Colwell R.R."/>
            <person name="Kim S.-J."/>
            <person name="Lee J.-H."/>
        </authorList>
    </citation>
    <scope>NUCLEOTIDE SEQUENCE [LARGE SCALE GENOMIC DNA]</scope>
    <source>
        <strain>NA1</strain>
    </source>
</reference>
<feature type="chain" id="PRO_1000099899" description="Hydrogenase maturation factor HypA">
    <location>
        <begin position="1"/>
        <end position="139"/>
    </location>
</feature>
<feature type="binding site" evidence="1">
    <location>
        <position position="2"/>
    </location>
    <ligand>
        <name>Ni(2+)</name>
        <dbReference type="ChEBI" id="CHEBI:49786"/>
    </ligand>
</feature>
<feature type="binding site" evidence="1">
    <location>
        <position position="73"/>
    </location>
    <ligand>
        <name>Zn(2+)</name>
        <dbReference type="ChEBI" id="CHEBI:29105"/>
    </ligand>
</feature>
<feature type="binding site" evidence="1">
    <location>
        <position position="76"/>
    </location>
    <ligand>
        <name>Zn(2+)</name>
        <dbReference type="ChEBI" id="CHEBI:29105"/>
    </ligand>
</feature>
<feature type="binding site" evidence="1">
    <location>
        <position position="110"/>
    </location>
    <ligand>
        <name>Zn(2+)</name>
        <dbReference type="ChEBI" id="CHEBI:29105"/>
    </ligand>
</feature>
<feature type="binding site" evidence="1">
    <location>
        <position position="113"/>
    </location>
    <ligand>
        <name>Zn(2+)</name>
        <dbReference type="ChEBI" id="CHEBI:29105"/>
    </ligand>
</feature>
<accession>B6YT59</accession>
<keyword id="KW-0479">Metal-binding</keyword>
<keyword id="KW-0533">Nickel</keyword>
<keyword id="KW-0862">Zinc</keyword>
<protein>
    <recommendedName>
        <fullName evidence="1">Hydrogenase maturation factor HypA</fullName>
    </recommendedName>
</protein>
<organism>
    <name type="scientific">Thermococcus onnurineus (strain NA1)</name>
    <dbReference type="NCBI Taxonomy" id="523850"/>
    <lineage>
        <taxon>Archaea</taxon>
        <taxon>Methanobacteriati</taxon>
        <taxon>Methanobacteriota</taxon>
        <taxon>Thermococci</taxon>
        <taxon>Thermococcales</taxon>
        <taxon>Thermococcaceae</taxon>
        <taxon>Thermococcus</taxon>
    </lineage>
</organism>
<gene>
    <name evidence="1" type="primary">hypA</name>
    <name type="ordered locus">TON_0261</name>
</gene>
<name>HYPA_THEON</name>
<sequence length="139" mass="15592">MHEWALADGIVRTALDYAQREGAKKLLAIQVVLGELQDVNAEIVEFAMKELLKGTIGEGAEIEFIEEEAVFKCRDCGHEWKLKEVKGSFDERIKEDIHFIPEVVHAFLACPKCGSRDFEVVQGRGVYISGIKIEKEGEA</sequence>
<dbReference type="EMBL" id="CP000855">
    <property type="protein sequence ID" value="ACJ15746.1"/>
    <property type="molecule type" value="Genomic_DNA"/>
</dbReference>
<dbReference type="RefSeq" id="WP_012571219.1">
    <property type="nucleotide sequence ID" value="NC_011529.1"/>
</dbReference>
<dbReference type="SMR" id="B6YT59"/>
<dbReference type="STRING" id="523850.TON_0261"/>
<dbReference type="GeneID" id="7017923"/>
<dbReference type="KEGG" id="ton:TON_0261"/>
<dbReference type="PATRIC" id="fig|523850.10.peg.263"/>
<dbReference type="eggNOG" id="arCOG04426">
    <property type="taxonomic scope" value="Archaea"/>
</dbReference>
<dbReference type="HOGENOM" id="CLU_126929_2_0_2"/>
<dbReference type="OrthoDB" id="36835at2157"/>
<dbReference type="Proteomes" id="UP000002727">
    <property type="component" value="Chromosome"/>
</dbReference>
<dbReference type="GO" id="GO:0016151">
    <property type="term" value="F:nickel cation binding"/>
    <property type="evidence" value="ECO:0007669"/>
    <property type="project" value="UniProtKB-UniRule"/>
</dbReference>
<dbReference type="GO" id="GO:0008270">
    <property type="term" value="F:zinc ion binding"/>
    <property type="evidence" value="ECO:0007669"/>
    <property type="project" value="UniProtKB-UniRule"/>
</dbReference>
<dbReference type="GO" id="GO:0051604">
    <property type="term" value="P:protein maturation"/>
    <property type="evidence" value="ECO:0007669"/>
    <property type="project" value="InterPro"/>
</dbReference>
<dbReference type="GO" id="GO:0036211">
    <property type="term" value="P:protein modification process"/>
    <property type="evidence" value="ECO:0007669"/>
    <property type="project" value="UniProtKB-UniRule"/>
</dbReference>
<dbReference type="FunFam" id="3.30.2320.80:FF:000004">
    <property type="entry name" value="Hydrogenase maturation factor HypA"/>
    <property type="match status" value="1"/>
</dbReference>
<dbReference type="Gene3D" id="3.30.2320.80">
    <property type="match status" value="1"/>
</dbReference>
<dbReference type="HAMAP" id="MF_00213">
    <property type="entry name" value="HypA_HybF"/>
    <property type="match status" value="1"/>
</dbReference>
<dbReference type="InterPro" id="IPR020538">
    <property type="entry name" value="Hydgase_Ni_incorp_HypA/HybF_CS"/>
</dbReference>
<dbReference type="InterPro" id="IPR000688">
    <property type="entry name" value="HypA/HybF"/>
</dbReference>
<dbReference type="NCBIfam" id="NF003008">
    <property type="entry name" value="PRK03824.1"/>
    <property type="match status" value="1"/>
</dbReference>
<dbReference type="PANTHER" id="PTHR34535">
    <property type="entry name" value="HYDROGENASE MATURATION FACTOR HYPA"/>
    <property type="match status" value="1"/>
</dbReference>
<dbReference type="PANTHER" id="PTHR34535:SF3">
    <property type="entry name" value="HYDROGENASE MATURATION FACTOR HYPA"/>
    <property type="match status" value="1"/>
</dbReference>
<dbReference type="Pfam" id="PF01155">
    <property type="entry name" value="HypA"/>
    <property type="match status" value="1"/>
</dbReference>
<dbReference type="PIRSF" id="PIRSF004761">
    <property type="entry name" value="Hydrgn_mat_HypA"/>
    <property type="match status" value="1"/>
</dbReference>
<dbReference type="PROSITE" id="PS01249">
    <property type="entry name" value="HYPA"/>
    <property type="match status" value="1"/>
</dbReference>
<evidence type="ECO:0000255" key="1">
    <source>
        <dbReference type="HAMAP-Rule" id="MF_00213"/>
    </source>
</evidence>